<reference key="1">
    <citation type="journal article" date="2009" name="Environ. Microbiol.">
        <title>Genome sequence of Desulfobacterium autotrophicum HRM2, a marine sulfate reducer oxidizing organic carbon completely to carbon dioxide.</title>
        <authorList>
            <person name="Strittmatter A.W."/>
            <person name="Liesegang H."/>
            <person name="Rabus R."/>
            <person name="Decker I."/>
            <person name="Amann J."/>
            <person name="Andres S."/>
            <person name="Henne A."/>
            <person name="Fricke W.F."/>
            <person name="Martinez-Arias R."/>
            <person name="Bartels D."/>
            <person name="Goesmann A."/>
            <person name="Krause L."/>
            <person name="Puehler A."/>
            <person name="Klenk H.P."/>
            <person name="Richter M."/>
            <person name="Schuler M."/>
            <person name="Gloeckner F.O."/>
            <person name="Meyerdierks A."/>
            <person name="Gottschalk G."/>
            <person name="Amann R."/>
        </authorList>
    </citation>
    <scope>NUCLEOTIDE SEQUENCE [LARGE SCALE GENOMIC DNA]</scope>
    <source>
        <strain>ATCC 43914 / DSM 3382 / VKM B-1955 / HRM2</strain>
    </source>
</reference>
<name>CMOA_DESAH</name>
<sequence>MKKDTLFATRKEPVPAFDFNESVASVFSDMLERSVPMYRESITRQAELALDFYRSKTLIYDLGCSHGNFGMLAGKRFGDRPFSMVGVDSSPPMIEKYKQRLEQESFRDNIVLVCDRVENLCLGNASVVVVNLTLQFLSLDRRDTLISDIYTALVPGGILLLTEKVLAWDSSIAAVHLDYYSRFKRENGYSELEISQKREALENVLVPETLEVHQQRLARAGFDRMDVWLKWFNFASMIAVKPERPGK</sequence>
<gene>
    <name evidence="1" type="primary">cmoA</name>
    <name type="ordered locus">HRM2_28930</name>
</gene>
<feature type="chain" id="PRO_1000215635" description="Carboxy-S-adenosyl-L-methionine synthase">
    <location>
        <begin position="1"/>
        <end position="247"/>
    </location>
</feature>
<feature type="binding site" evidence="1">
    <location>
        <position position="38"/>
    </location>
    <ligand>
        <name>S-adenosyl-L-methionine</name>
        <dbReference type="ChEBI" id="CHEBI:59789"/>
    </ligand>
</feature>
<feature type="binding site" evidence="1">
    <location>
        <begin position="63"/>
        <end position="65"/>
    </location>
    <ligand>
        <name>S-adenosyl-L-methionine</name>
        <dbReference type="ChEBI" id="CHEBI:59789"/>
    </ligand>
</feature>
<feature type="binding site" evidence="1">
    <location>
        <position position="131"/>
    </location>
    <ligand>
        <name>S-adenosyl-L-methionine</name>
        <dbReference type="ChEBI" id="CHEBI:59789"/>
    </ligand>
</feature>
<feature type="binding site" evidence="1">
    <location>
        <position position="198"/>
    </location>
    <ligand>
        <name>S-adenosyl-L-methionine</name>
        <dbReference type="ChEBI" id="CHEBI:59789"/>
    </ligand>
</feature>
<proteinExistence type="inferred from homology"/>
<comment type="function">
    <text evidence="1">Catalyzes the conversion of S-adenosyl-L-methionine (SAM) to carboxy-S-adenosyl-L-methionine (Cx-SAM).</text>
</comment>
<comment type="catalytic activity">
    <reaction evidence="1">
        <text>prephenate + S-adenosyl-L-methionine = carboxy-S-adenosyl-L-methionine + 3-phenylpyruvate + H2O</text>
        <dbReference type="Rhea" id="RHEA:51692"/>
        <dbReference type="ChEBI" id="CHEBI:15377"/>
        <dbReference type="ChEBI" id="CHEBI:18005"/>
        <dbReference type="ChEBI" id="CHEBI:29934"/>
        <dbReference type="ChEBI" id="CHEBI:59789"/>
        <dbReference type="ChEBI" id="CHEBI:134278"/>
    </reaction>
</comment>
<comment type="subunit">
    <text evidence="1">Homodimer.</text>
</comment>
<comment type="similarity">
    <text evidence="1">Belongs to the class I-like SAM-binding methyltransferase superfamily. Cx-SAM synthase family.</text>
</comment>
<accession>C0QJG8</accession>
<dbReference type="EC" id="2.1.3.-" evidence="1"/>
<dbReference type="EMBL" id="CP001087">
    <property type="protein sequence ID" value="ACN15981.1"/>
    <property type="molecule type" value="Genomic_DNA"/>
</dbReference>
<dbReference type="RefSeq" id="WP_015904743.1">
    <property type="nucleotide sequence ID" value="NC_012108.1"/>
</dbReference>
<dbReference type="SMR" id="C0QJG8"/>
<dbReference type="STRING" id="177437.HRM2_28930"/>
<dbReference type="KEGG" id="dat:HRM2_28930"/>
<dbReference type="eggNOG" id="COG4106">
    <property type="taxonomic scope" value="Bacteria"/>
</dbReference>
<dbReference type="HOGENOM" id="CLU_078475_0_0_7"/>
<dbReference type="OrthoDB" id="5386938at2"/>
<dbReference type="Proteomes" id="UP000000442">
    <property type="component" value="Chromosome"/>
</dbReference>
<dbReference type="GO" id="GO:0016743">
    <property type="term" value="F:carboxyl- or carbamoyltransferase activity"/>
    <property type="evidence" value="ECO:0007669"/>
    <property type="project" value="UniProtKB-UniRule"/>
</dbReference>
<dbReference type="GO" id="GO:1904047">
    <property type="term" value="F:S-adenosyl-L-methionine binding"/>
    <property type="evidence" value="ECO:0007669"/>
    <property type="project" value="UniProtKB-UniRule"/>
</dbReference>
<dbReference type="GO" id="GO:0002098">
    <property type="term" value="P:tRNA wobble uridine modification"/>
    <property type="evidence" value="ECO:0007669"/>
    <property type="project" value="InterPro"/>
</dbReference>
<dbReference type="CDD" id="cd02440">
    <property type="entry name" value="AdoMet_MTases"/>
    <property type="match status" value="1"/>
</dbReference>
<dbReference type="Gene3D" id="3.40.50.150">
    <property type="entry name" value="Vaccinia Virus protein VP39"/>
    <property type="match status" value="1"/>
</dbReference>
<dbReference type="HAMAP" id="MF_01589">
    <property type="entry name" value="Cx_SAM_synthase"/>
    <property type="match status" value="1"/>
</dbReference>
<dbReference type="InterPro" id="IPR005271">
    <property type="entry name" value="CmoA"/>
</dbReference>
<dbReference type="InterPro" id="IPR041698">
    <property type="entry name" value="Methyltransf_25"/>
</dbReference>
<dbReference type="InterPro" id="IPR029063">
    <property type="entry name" value="SAM-dependent_MTases_sf"/>
</dbReference>
<dbReference type="NCBIfam" id="TIGR00740">
    <property type="entry name" value="carboxy-S-adenosyl-L-methionine synthase CmoA"/>
    <property type="match status" value="1"/>
</dbReference>
<dbReference type="PANTHER" id="PTHR43861:SF2">
    <property type="entry name" value="CARBOXY-S-ADENOSYL-L-METHIONINE SYNTHASE"/>
    <property type="match status" value="1"/>
</dbReference>
<dbReference type="PANTHER" id="PTHR43861">
    <property type="entry name" value="TRANS-ACONITATE 2-METHYLTRANSFERASE-RELATED"/>
    <property type="match status" value="1"/>
</dbReference>
<dbReference type="Pfam" id="PF13649">
    <property type="entry name" value="Methyltransf_25"/>
    <property type="match status" value="1"/>
</dbReference>
<dbReference type="PIRSF" id="PIRSF006325">
    <property type="entry name" value="MeTrfase_bac"/>
    <property type="match status" value="1"/>
</dbReference>
<dbReference type="SUPFAM" id="SSF53335">
    <property type="entry name" value="S-adenosyl-L-methionine-dependent methyltransferases"/>
    <property type="match status" value="1"/>
</dbReference>
<organism>
    <name type="scientific">Desulforapulum autotrophicum (strain ATCC 43914 / DSM 3382 / VKM B-1955 / HRM2)</name>
    <name type="common">Desulfobacterium autotrophicum</name>
    <dbReference type="NCBI Taxonomy" id="177437"/>
    <lineage>
        <taxon>Bacteria</taxon>
        <taxon>Pseudomonadati</taxon>
        <taxon>Thermodesulfobacteriota</taxon>
        <taxon>Desulfobacteria</taxon>
        <taxon>Desulfobacterales</taxon>
        <taxon>Desulfobacteraceae</taxon>
        <taxon>Desulforapulum</taxon>
    </lineage>
</organism>
<evidence type="ECO:0000255" key="1">
    <source>
        <dbReference type="HAMAP-Rule" id="MF_01589"/>
    </source>
</evidence>
<keyword id="KW-1185">Reference proteome</keyword>
<keyword id="KW-0949">S-adenosyl-L-methionine</keyword>
<keyword id="KW-0808">Transferase</keyword>
<protein>
    <recommendedName>
        <fullName evidence="1">Carboxy-S-adenosyl-L-methionine synthase</fullName>
        <shortName evidence="1">Cx-SAM synthase</shortName>
        <ecNumber evidence="1">2.1.3.-</ecNumber>
    </recommendedName>
</protein>